<name>TRMD_BRUA2</name>
<evidence type="ECO:0000255" key="1">
    <source>
        <dbReference type="HAMAP-Rule" id="MF_00605"/>
    </source>
</evidence>
<accession>Q2YLT1</accession>
<dbReference type="EC" id="2.1.1.228" evidence="1"/>
<dbReference type="EMBL" id="AM040264">
    <property type="protein sequence ID" value="CAJ11870.1"/>
    <property type="molecule type" value="Genomic_DNA"/>
</dbReference>
<dbReference type="RefSeq" id="WP_002964982.1">
    <property type="nucleotide sequence ID" value="NZ_KN046823.1"/>
</dbReference>
<dbReference type="SMR" id="Q2YLT1"/>
<dbReference type="STRING" id="359391.BAB1_1914"/>
<dbReference type="GeneID" id="97534799"/>
<dbReference type="KEGG" id="bmf:BAB1_1914"/>
<dbReference type="PATRIC" id="fig|359391.11.peg.1155"/>
<dbReference type="HOGENOM" id="CLU_047363_0_1_5"/>
<dbReference type="PhylomeDB" id="Q2YLT1"/>
<dbReference type="Proteomes" id="UP000002719">
    <property type="component" value="Chromosome I"/>
</dbReference>
<dbReference type="GO" id="GO:0005829">
    <property type="term" value="C:cytosol"/>
    <property type="evidence" value="ECO:0007669"/>
    <property type="project" value="TreeGrafter"/>
</dbReference>
<dbReference type="GO" id="GO:0052906">
    <property type="term" value="F:tRNA (guanine(37)-N1)-methyltransferase activity"/>
    <property type="evidence" value="ECO:0007669"/>
    <property type="project" value="UniProtKB-UniRule"/>
</dbReference>
<dbReference type="GO" id="GO:0002939">
    <property type="term" value="P:tRNA N1-guanine methylation"/>
    <property type="evidence" value="ECO:0007669"/>
    <property type="project" value="TreeGrafter"/>
</dbReference>
<dbReference type="CDD" id="cd18080">
    <property type="entry name" value="TrmD-like"/>
    <property type="match status" value="1"/>
</dbReference>
<dbReference type="Gene3D" id="3.40.1280.10">
    <property type="match status" value="1"/>
</dbReference>
<dbReference type="Gene3D" id="1.10.1270.20">
    <property type="entry name" value="tRNA(m1g37)methyltransferase, domain 2"/>
    <property type="match status" value="1"/>
</dbReference>
<dbReference type="HAMAP" id="MF_00605">
    <property type="entry name" value="TrmD"/>
    <property type="match status" value="1"/>
</dbReference>
<dbReference type="InterPro" id="IPR029028">
    <property type="entry name" value="Alpha/beta_knot_MTases"/>
</dbReference>
<dbReference type="InterPro" id="IPR023148">
    <property type="entry name" value="tRNA_m1G_MeTrfase_C_sf"/>
</dbReference>
<dbReference type="InterPro" id="IPR002649">
    <property type="entry name" value="tRNA_m1G_MeTrfase_TrmD"/>
</dbReference>
<dbReference type="InterPro" id="IPR029026">
    <property type="entry name" value="tRNA_m1G_MTases_N"/>
</dbReference>
<dbReference type="InterPro" id="IPR016009">
    <property type="entry name" value="tRNA_MeTrfase_TRMD/TRM10"/>
</dbReference>
<dbReference type="NCBIfam" id="NF000648">
    <property type="entry name" value="PRK00026.1"/>
    <property type="match status" value="1"/>
</dbReference>
<dbReference type="NCBIfam" id="TIGR00088">
    <property type="entry name" value="trmD"/>
    <property type="match status" value="1"/>
</dbReference>
<dbReference type="PANTHER" id="PTHR46417">
    <property type="entry name" value="TRNA (GUANINE-N(1)-)-METHYLTRANSFERASE"/>
    <property type="match status" value="1"/>
</dbReference>
<dbReference type="PANTHER" id="PTHR46417:SF1">
    <property type="entry name" value="TRNA (GUANINE-N(1)-)-METHYLTRANSFERASE"/>
    <property type="match status" value="1"/>
</dbReference>
<dbReference type="Pfam" id="PF01746">
    <property type="entry name" value="tRNA_m1G_MT"/>
    <property type="match status" value="1"/>
</dbReference>
<dbReference type="PIRSF" id="PIRSF000386">
    <property type="entry name" value="tRNA_mtase"/>
    <property type="match status" value="1"/>
</dbReference>
<dbReference type="SUPFAM" id="SSF75217">
    <property type="entry name" value="alpha/beta knot"/>
    <property type="match status" value="1"/>
</dbReference>
<protein>
    <recommendedName>
        <fullName evidence="1">tRNA (guanine-N(1)-)-methyltransferase</fullName>
        <ecNumber evidence="1">2.1.1.228</ecNumber>
    </recommendedName>
    <alternativeName>
        <fullName evidence="1">M1G-methyltransferase</fullName>
    </alternativeName>
    <alternativeName>
        <fullName evidence="1">tRNA [GM37] methyltransferase</fullName>
    </alternativeName>
</protein>
<feature type="chain" id="PRO_0000257394" description="tRNA (guanine-N(1)-)-methyltransferase">
    <location>
        <begin position="1"/>
        <end position="244"/>
    </location>
</feature>
<feature type="binding site" evidence="1">
    <location>
        <position position="120"/>
    </location>
    <ligand>
        <name>S-adenosyl-L-methionine</name>
        <dbReference type="ChEBI" id="CHEBI:59789"/>
    </ligand>
</feature>
<feature type="binding site" evidence="1">
    <location>
        <begin position="140"/>
        <end position="145"/>
    </location>
    <ligand>
        <name>S-adenosyl-L-methionine</name>
        <dbReference type="ChEBI" id="CHEBI:59789"/>
    </ligand>
</feature>
<comment type="function">
    <text evidence="1">Specifically methylates guanosine-37 in various tRNAs.</text>
</comment>
<comment type="catalytic activity">
    <reaction evidence="1">
        <text>guanosine(37) in tRNA + S-adenosyl-L-methionine = N(1)-methylguanosine(37) in tRNA + S-adenosyl-L-homocysteine + H(+)</text>
        <dbReference type="Rhea" id="RHEA:36899"/>
        <dbReference type="Rhea" id="RHEA-COMP:10145"/>
        <dbReference type="Rhea" id="RHEA-COMP:10147"/>
        <dbReference type="ChEBI" id="CHEBI:15378"/>
        <dbReference type="ChEBI" id="CHEBI:57856"/>
        <dbReference type="ChEBI" id="CHEBI:59789"/>
        <dbReference type="ChEBI" id="CHEBI:73542"/>
        <dbReference type="ChEBI" id="CHEBI:74269"/>
        <dbReference type="EC" id="2.1.1.228"/>
    </reaction>
</comment>
<comment type="subunit">
    <text evidence="1">Homodimer.</text>
</comment>
<comment type="subcellular location">
    <subcellularLocation>
        <location evidence="1">Cytoplasm</location>
    </subcellularLocation>
</comment>
<comment type="similarity">
    <text evidence="1">Belongs to the RNA methyltransferase TrmD family.</text>
</comment>
<gene>
    <name evidence="1" type="primary">trmD</name>
    <name type="ordered locus">BAB1_1914</name>
</gene>
<reference key="1">
    <citation type="journal article" date="2005" name="Infect. Immun.">
        <title>Whole-genome analyses of speciation events in pathogenic Brucellae.</title>
        <authorList>
            <person name="Chain P.S."/>
            <person name="Comerci D.J."/>
            <person name="Tolmasky M.E."/>
            <person name="Larimer F.W."/>
            <person name="Malfatti S.A."/>
            <person name="Vergez L.M."/>
            <person name="Aguero F."/>
            <person name="Land M.L."/>
            <person name="Ugalde R.A."/>
            <person name="Garcia E."/>
        </authorList>
    </citation>
    <scope>NUCLEOTIDE SEQUENCE [LARGE SCALE GENOMIC DNA]</scope>
    <source>
        <strain>2308</strain>
    </source>
</reference>
<keyword id="KW-0963">Cytoplasm</keyword>
<keyword id="KW-0489">Methyltransferase</keyword>
<keyword id="KW-1185">Reference proteome</keyword>
<keyword id="KW-0949">S-adenosyl-L-methionine</keyword>
<keyword id="KW-0808">Transferase</keyword>
<keyword id="KW-0819">tRNA processing</keyword>
<sequence length="244" mass="26827">MTDLPEKEGGRFHASVLTLYPEMFPGPLGISLAGKALAEGKWQLDTVQIRDFAEGRHRMVDDTPSGGGAGMVMKADVVARALDSVDDGRPMLLMTPRGKPLTQERVRALADGAGAIILCGRFEGVDERVIEGRNLEEISIGDYILSGGETAAIVLLDAVVRLLPGVMGNRESGETESFETGLLEHPHYTRPQEWEGRAIPDILTSGNHGAIDKWRLEQAERITRERRPDLWEAYCKNRRKIGGQ</sequence>
<organism>
    <name type="scientific">Brucella abortus (strain 2308)</name>
    <dbReference type="NCBI Taxonomy" id="359391"/>
    <lineage>
        <taxon>Bacteria</taxon>
        <taxon>Pseudomonadati</taxon>
        <taxon>Pseudomonadota</taxon>
        <taxon>Alphaproteobacteria</taxon>
        <taxon>Hyphomicrobiales</taxon>
        <taxon>Brucellaceae</taxon>
        <taxon>Brucella/Ochrobactrum group</taxon>
        <taxon>Brucella</taxon>
    </lineage>
</organism>
<proteinExistence type="inferred from homology"/>